<organism>
    <name type="scientific">Biston betularia</name>
    <name type="common">Pepper-and-salt geometer moth</name>
    <name type="synonym">Phalaena betularia</name>
    <dbReference type="NCBI Taxonomy" id="82595"/>
    <lineage>
        <taxon>Eukaryota</taxon>
        <taxon>Metazoa</taxon>
        <taxon>Ecdysozoa</taxon>
        <taxon>Arthropoda</taxon>
        <taxon>Hexapoda</taxon>
        <taxon>Insecta</taxon>
        <taxon>Pterygota</taxon>
        <taxon>Neoptera</taxon>
        <taxon>Endopterygota</taxon>
        <taxon>Lepidoptera</taxon>
        <taxon>Glossata</taxon>
        <taxon>Ditrysia</taxon>
        <taxon>Geometroidea</taxon>
        <taxon>Geometridae</taxon>
        <taxon>Ennominae</taxon>
        <taxon>Biston</taxon>
    </lineage>
</organism>
<keyword id="KW-0025">Alternative splicing</keyword>
<keyword id="KW-0963">Cytoplasm</keyword>
<keyword id="KW-0677">Repeat</keyword>
<keyword id="KW-0853">WD repeat</keyword>
<dbReference type="EMBL" id="KT235895">
    <property type="protein sequence ID" value="ANG83466.1"/>
    <property type="molecule type" value="mRNA"/>
</dbReference>
<dbReference type="EMBL" id="KT235896">
    <property type="protein sequence ID" value="ANG83467.1"/>
    <property type="molecule type" value="mRNA"/>
</dbReference>
<dbReference type="EMBL" id="KT235897">
    <property type="protein sequence ID" value="ANG83468.1"/>
    <property type="molecule type" value="mRNA"/>
</dbReference>
<dbReference type="EMBL" id="KT235898">
    <property type="protein sequence ID" value="ANG83469.1"/>
    <property type="molecule type" value="mRNA"/>
</dbReference>
<dbReference type="EMBL" id="KT235899">
    <property type="protein sequence ID" value="ANG83470.1"/>
    <property type="molecule type" value="mRNA"/>
</dbReference>
<dbReference type="EMBL" id="KT235900">
    <property type="protein sequence ID" value="ANG83471.1"/>
    <property type="molecule type" value="mRNA"/>
</dbReference>
<dbReference type="EMBL" id="KT235901">
    <property type="protein sequence ID" value="ANG83472.1"/>
    <property type="molecule type" value="mRNA"/>
</dbReference>
<dbReference type="EMBL" id="KT235902">
    <property type="protein sequence ID" value="ANG83473.1"/>
    <property type="molecule type" value="mRNA"/>
</dbReference>
<dbReference type="EMBL" id="KT235903">
    <property type="protein sequence ID" value="ANG83474.1"/>
    <property type="molecule type" value="mRNA"/>
</dbReference>
<dbReference type="EMBL" id="KT235904">
    <property type="protein sequence ID" value="ANG83475.1"/>
    <property type="molecule type" value="mRNA"/>
</dbReference>
<dbReference type="EMBL" id="KT235905">
    <property type="protein sequence ID" value="ANG83476.1"/>
    <property type="molecule type" value="mRNA"/>
</dbReference>
<dbReference type="EMBL" id="KT235906">
    <property type="protein sequence ID" value="ANG83477.1"/>
    <property type="molecule type" value="mRNA"/>
</dbReference>
<dbReference type="SMR" id="P0DOC0"/>
<dbReference type="GO" id="GO:0005680">
    <property type="term" value="C:anaphase-promoting complex"/>
    <property type="evidence" value="ECO:0007669"/>
    <property type="project" value="TreeGrafter"/>
</dbReference>
<dbReference type="GO" id="GO:0005737">
    <property type="term" value="C:cytoplasm"/>
    <property type="evidence" value="ECO:0007669"/>
    <property type="project" value="UniProtKB-SubCell"/>
</dbReference>
<dbReference type="GO" id="GO:0010997">
    <property type="term" value="F:anaphase-promoting complex binding"/>
    <property type="evidence" value="ECO:0007669"/>
    <property type="project" value="InterPro"/>
</dbReference>
<dbReference type="GO" id="GO:1990757">
    <property type="term" value="F:ubiquitin ligase activator activity"/>
    <property type="evidence" value="ECO:0007669"/>
    <property type="project" value="TreeGrafter"/>
</dbReference>
<dbReference type="GO" id="GO:0031145">
    <property type="term" value="P:anaphase-promoting complex-dependent catabolic process"/>
    <property type="evidence" value="ECO:0007669"/>
    <property type="project" value="TreeGrafter"/>
</dbReference>
<dbReference type="GO" id="GO:1905786">
    <property type="term" value="P:positive regulation of anaphase-promoting complex-dependent catabolic process"/>
    <property type="evidence" value="ECO:0007669"/>
    <property type="project" value="TreeGrafter"/>
</dbReference>
<dbReference type="Gene3D" id="2.130.10.10">
    <property type="entry name" value="YVTN repeat-like/Quinoprotein amine dehydrogenase"/>
    <property type="match status" value="1"/>
</dbReference>
<dbReference type="InterPro" id="IPR033010">
    <property type="entry name" value="Cdc20/Fizzy"/>
</dbReference>
<dbReference type="InterPro" id="IPR015943">
    <property type="entry name" value="WD40/YVTN_repeat-like_dom_sf"/>
</dbReference>
<dbReference type="InterPro" id="IPR036322">
    <property type="entry name" value="WD40_repeat_dom_sf"/>
</dbReference>
<dbReference type="InterPro" id="IPR001680">
    <property type="entry name" value="WD40_rpt"/>
</dbReference>
<dbReference type="PANTHER" id="PTHR19918">
    <property type="entry name" value="CELL DIVISION CYCLE 20 CDC20 FIZZY -RELATED"/>
    <property type="match status" value="1"/>
</dbReference>
<dbReference type="PANTHER" id="PTHR19918:SF52">
    <property type="entry name" value="PROTEIN CORTEX"/>
    <property type="match status" value="1"/>
</dbReference>
<dbReference type="Pfam" id="PF00400">
    <property type="entry name" value="WD40"/>
    <property type="match status" value="2"/>
</dbReference>
<dbReference type="SMART" id="SM00320">
    <property type="entry name" value="WD40"/>
    <property type="match status" value="3"/>
</dbReference>
<dbReference type="SUPFAM" id="SSF50978">
    <property type="entry name" value="WD40 repeat-like"/>
    <property type="match status" value="1"/>
</dbReference>
<dbReference type="PROSITE" id="PS00678">
    <property type="entry name" value="WD_REPEATS_1"/>
    <property type="match status" value="1"/>
</dbReference>
<dbReference type="PROSITE" id="PS50082">
    <property type="entry name" value="WD_REPEATS_2"/>
    <property type="match status" value="1"/>
</dbReference>
<dbReference type="PROSITE" id="PS50294">
    <property type="entry name" value="WD_REPEATS_REGION"/>
    <property type="match status" value="1"/>
</dbReference>
<sequence length="441" mass="50902">MGVGSSLRMQLTAQKPRVDRFVVPRYSLPEIHRRMTWSDRCEKYNGEIWSSKYLQQKRYINFLDEAFGLAPLKAQQRNSDTFDDWCWPCAPRKKSYLSTADNVLDLPSYSITSFPDVLDWSHDDILVAALGKKYHKWSWRTQSPVDQGQTMFDIRCCKFDPKGKRLLLGTDMRVEVHNELSKCQFVQYCKCNIQICTITAIDWSPTGNSFVTGCSRGRICAMNEKDFPIKSLVLIEGAMLVVKISPNARYVAVAGVHKHRVWILSWPDLIRFRFMKTNEIVKDLNWHPWQTALLGVATLSSDRHASMIIWEPHATDKLRQQDVGRGRYSIDAMRFNNKTGELLLSLWSLDVNVPYPKSSELVVMSNFDTVVDHWGESHTGLNRIRTMVFSPDGTKLATATADEDLIIWNFLPNDYKKILARKKFTAFPQFLDICSYGYTIR</sequence>
<protein>
    <recommendedName>
        <fullName evidence="1">Protein cortex</fullName>
    </recommendedName>
</protein>
<accession>P0DOC0</accession>
<gene>
    <name evidence="1" type="primary">cort</name>
</gene>
<comment type="function">
    <text evidence="1 3">Controls wing pigmentation patterning, possibly by regulating scale cell development (PubMed:27251284). Probably acts as an activator of the anaphase promoting complex/cyclosome (APC/C) that promotes the ubiquitin ligase activity and substrate specificity of the APC/C (By similarity).</text>
</comment>
<comment type="subcellular location">
    <subcellularLocation>
        <location evidence="1">Cytoplasm</location>
    </subcellularLocation>
</comment>
<comment type="alternative products">
    <event type="alternative splicing"/>
    <isoform>
        <id>P0DOC0-1</id>
        <name evidence="4">A1</name>
        <sequence type="displayed"/>
    </isoform>
    <isoform>
        <id>P0DOC0-2</id>
        <name evidence="4">A2</name>
        <name evidence="4">A6</name>
        <name evidence="4">B2</name>
        <name evidence="4">B5</name>
        <name evidence="4">B6</name>
        <sequence type="described" ref="VSP_058498"/>
    </isoform>
    <isoform>
        <id>P0DOC0-3</id>
        <name evidence="4">A3</name>
        <sequence type="described" ref="VSP_058502"/>
    </isoform>
    <isoform>
        <id>P0DOC0-4</id>
        <name evidence="4">A4</name>
        <sequence type="described" ref="VSP_058500"/>
    </isoform>
    <isoform>
        <id>P0DOC0-5</id>
        <name evidence="4">A5</name>
        <sequence type="described" ref="VSP_058501"/>
    </isoform>
    <isoform>
        <id>P0DOC0-7</id>
        <name evidence="4">B1</name>
        <sequence type="described" ref="VSP_058499"/>
    </isoform>
    <isoform>
        <id>P0DOC0-9</id>
        <name evidence="4">B3</name>
        <sequence type="described" ref="VSP_058499 VSP_058502"/>
    </isoform>
    <isoform>
        <id>P0DOC0-10</id>
        <name evidence="4">B4</name>
        <sequence type="described" ref="VSP_058497"/>
    </isoform>
</comment>
<comment type="developmental stage">
    <text evidence="3">Highly expressed between the sixth larval instar (La6) and day 4 prepupa (Cr4), coinciding with a phase of rapid wing disk morphogenesis. Expression drops to a low level by day 6 prepupa (Cr6).</text>
</comment>
<comment type="polymorphism">
    <text evidence="3">Variations in cort gene cortex directly affect wing pigmentation patterning and are the cause of the darkening of the wing in the f. carbonaria strain. This phenomenon, known as industrial melanism, is a classroom example of evolution: during industrial revolution, the common pale B.betularia strain (f. typica) was replaced by a previously unknown black strain (f. carbonaria), driven by the interaction between bird predation and coal pollution. The variation is caused by insertion of a transposable element into the first intron of cort gene, which occured around 1819, in the early years of the industrial revolution.</text>
</comment>
<comment type="similarity">
    <text evidence="5">Belongs to the WD repeat CORT family.</text>
</comment>
<comment type="online information" name="Protein Spotlight">
    <link uri="https://www.proteinspotlight.org/back_issues/183/"/>
    <text>You want it darker - Issue 183 of September 2016</text>
</comment>
<reference key="1">
    <citation type="journal article" date="2016" name="Nature">
        <title>The industrial melanism mutation in British peppered moths is a transposable element.</title>
        <authorList>
            <person name="Van't Hof A.E."/>
            <person name="Campagne P."/>
            <person name="Rigden D.J."/>
            <person name="Yung C.J."/>
            <person name="Lingley J."/>
            <person name="Quail M.A."/>
            <person name="Hall N."/>
            <person name="Darby A.C."/>
            <person name="Saccheri I.J."/>
        </authorList>
    </citation>
    <scope>NUCLEOTIDE SEQUENCE [MRNA] (ISOFORMS A1; A2; A3; A4; A5; B1; B3 AND B4)</scope>
    <scope>FUNCTION</scope>
    <scope>DEVELOPMENTAL STAGE</scope>
    <scope>POLYMORPHISM</scope>
    <source>
        <strain>f. carbonaria</strain>
        <strain>f. typica</strain>
    </source>
</reference>
<proteinExistence type="evidence at transcript level"/>
<evidence type="ECO:0000250" key="1">
    <source>
        <dbReference type="UniProtKB" id="Q960N3"/>
    </source>
</evidence>
<evidence type="ECO:0000255" key="2"/>
<evidence type="ECO:0000269" key="3">
    <source>
    </source>
</evidence>
<evidence type="ECO:0000303" key="4">
    <source>
    </source>
</evidence>
<evidence type="ECO:0000305" key="5"/>
<evidence type="ECO:0000305" key="6">
    <source>
    </source>
</evidence>
<name>CORT_BISBE</name>
<feature type="chain" id="PRO_0000437220" description="Protein cortex">
    <location>
        <begin position="1"/>
        <end position="441"/>
    </location>
</feature>
<feature type="repeat" description="WD 1" evidence="2">
    <location>
        <begin position="110"/>
        <end position="148"/>
    </location>
</feature>
<feature type="repeat" description="WD 2" evidence="2">
    <location>
        <begin position="149"/>
        <end position="187"/>
    </location>
</feature>
<feature type="repeat" description="WD 3" evidence="2">
    <location>
        <begin position="193"/>
        <end position="233"/>
    </location>
</feature>
<feature type="repeat" description="WD 4" evidence="2">
    <location>
        <begin position="235"/>
        <end position="276"/>
    </location>
</feature>
<feature type="repeat" description="WD 5" evidence="2">
    <location>
        <begin position="277"/>
        <end position="320"/>
    </location>
</feature>
<feature type="repeat" description="WD 6" evidence="2">
    <location>
        <begin position="345"/>
        <end position="379"/>
    </location>
</feature>
<feature type="repeat" description="WD 7" evidence="2">
    <location>
        <begin position="380"/>
        <end position="420"/>
    </location>
</feature>
<feature type="short sequence motif" description="D-box" evidence="1">
    <location>
        <begin position="379"/>
        <end position="390"/>
    </location>
</feature>
<feature type="splice variant" id="VSP_058497" description="In isoform B4." evidence="6">
    <location>
        <begin position="1"/>
        <end position="171"/>
    </location>
</feature>
<feature type="splice variant" id="VSP_058498" description="In isoform A2." evidence="6">
    <location>
        <begin position="1"/>
        <end position="150"/>
    </location>
</feature>
<feature type="splice variant" id="VSP_058499" description="In isoform B1 and isoform B3." evidence="6">
    <location>
        <begin position="1"/>
        <end position="34"/>
    </location>
</feature>
<feature type="splice variant" id="VSP_058500" description="In isoform A4." evidence="6">
    <location>
        <begin position="11"/>
        <end position="167"/>
    </location>
</feature>
<feature type="splice variant" id="VSP_058501" description="In isoform A5." evidence="6">
    <location>
        <begin position="11"/>
        <end position="49"/>
    </location>
</feature>
<feature type="splice variant" id="VSP_058502" description="In isoform A3 and isoform B3." evidence="6">
    <location>
        <begin position="50"/>
        <end position="167"/>
    </location>
</feature>